<keyword id="KW-0002">3D-structure</keyword>
<keyword id="KW-0963">Cytoplasm</keyword>
<keyword id="KW-0903">Direct protein sequencing</keyword>
<keyword id="KW-0521">NADP</keyword>
<keyword id="KW-0560">Oxidoreductase</keyword>
<keyword id="KW-0597">Phosphoprotein</keyword>
<keyword id="KW-1267">Proteomics identification</keyword>
<keyword id="KW-1185">Reference proteome</keyword>
<keyword id="KW-0808">Transferase</keyword>
<name>BLVRB_HUMAN</name>
<comment type="function">
    <text evidence="1 2 5 6 9 13 14">Enzyme that can both act as a NAD(P)H-dependent reductase and a S-nitroso-CoA-dependent nitrosyltransferase (PubMed:10620517, PubMed:18241201, PubMed:27207795, PubMed:38056462, PubMed:7929092). Promotes fetal heme degradation during development (PubMed:10858451, PubMed:18241201, PubMed:7929092). Also expressed in adult tissues, where it acts as a regulator of hematopoiesis, intermediary metabolism (glutaminolysis, glycolysis, TCA cycle and pentose phosphate pathway) and insulin signaling (PubMed:27207795, PubMed:29500232, PubMed:38056462). Has a broad specificity oxidoreductase activity by catalyzing the NAD(P)H-dependent reduction of a variety of flavins, such as riboflavin, FAD or FMN, biliverdins, methemoglobin and PQQ (pyrroloquinoline quinone) (PubMed:10620517, PubMed:18241201, PubMed:7929092). Contributes to fetal heme catabolism by catalyzing reduction of biliverdin IXbeta into bilirubin IXbeta in the liver (PubMed:10858451, PubMed:18241201, PubMed:7929092). Biliverdin IXbeta, which constitutes the major heme catabolite in the fetus is not present in adult (PubMed:10858451, PubMed:18241201, PubMed:7929092). Does not reduce bilirubin IXalpha (PubMed:10858451, PubMed:18241201, PubMed:7929092). Can also reduce the complexed Fe(3+) iron to Fe(2+) in the presence of FMN and NADPH (PubMed:10620517). Acts as a protein nitrosyltransferase by catalyzing nitrosylation of cysteine residues of target proteins, such as HMOX2, INSR and IRS1 (PubMed:38056462). S-nitroso-CoA-dependent nitrosyltransferase activity is mediated via a 'ping-pong' mechanism: BLVRB first associates with both S-nitroso-CoA and protein substrate, nitric oxide group is then transferred from S-nitroso-CoA to Cys-109 and Cys-188 residues of BLVRB and from S-nitroso-BLVRB to the protein substrate (PubMed:38056462). Inhibits insulin signaling by mediating nitrosylation of INSR and IRS1, leading to their inhibition (PubMed:38056462).</text>
</comment>
<comment type="catalytic activity">
    <reaction evidence="1 5 6">
        <text>reduced riboflavin + NADP(+) = riboflavin + NADPH + 2 H(+)</text>
        <dbReference type="Rhea" id="RHEA:19377"/>
        <dbReference type="ChEBI" id="CHEBI:15378"/>
        <dbReference type="ChEBI" id="CHEBI:17607"/>
        <dbReference type="ChEBI" id="CHEBI:57783"/>
        <dbReference type="ChEBI" id="CHEBI:57986"/>
        <dbReference type="ChEBI" id="CHEBI:58349"/>
        <dbReference type="EC" id="1.5.1.30"/>
    </reaction>
    <physiologicalReaction direction="right-to-left" evidence="1 5 6">
        <dbReference type="Rhea" id="RHEA:19379"/>
    </physiologicalReaction>
</comment>
<comment type="catalytic activity">
    <reaction evidence="2 5 14">
        <text>bilirubin IXbeta + NADP(+) = biliverdin IXbeta + NADPH + H(+)</text>
        <dbReference type="Rhea" id="RHEA:78395"/>
        <dbReference type="ChEBI" id="CHEBI:15378"/>
        <dbReference type="ChEBI" id="CHEBI:57783"/>
        <dbReference type="ChEBI" id="CHEBI:58349"/>
        <dbReference type="ChEBI" id="CHEBI:136509"/>
        <dbReference type="ChEBI" id="CHEBI:228295"/>
    </reaction>
    <physiologicalReaction direction="right-to-left" evidence="2 5 14">
        <dbReference type="Rhea" id="RHEA:78397"/>
    </physiologicalReaction>
</comment>
<comment type="catalytic activity">
    <reaction evidence="5">
        <text>FMNH2 + NAD(+) = FMN + NADH + 2 H(+)</text>
        <dbReference type="Rhea" id="RHEA:21620"/>
        <dbReference type="ChEBI" id="CHEBI:15378"/>
        <dbReference type="ChEBI" id="CHEBI:57540"/>
        <dbReference type="ChEBI" id="CHEBI:57618"/>
        <dbReference type="ChEBI" id="CHEBI:57945"/>
        <dbReference type="ChEBI" id="CHEBI:58210"/>
    </reaction>
    <physiologicalReaction direction="right-to-left" evidence="5">
        <dbReference type="Rhea" id="RHEA:21622"/>
    </physiologicalReaction>
</comment>
<comment type="catalytic activity">
    <reaction evidence="5">
        <text>FMNH2 + NADP(+) = FMN + NADPH + 2 H(+)</text>
        <dbReference type="Rhea" id="RHEA:21624"/>
        <dbReference type="ChEBI" id="CHEBI:15378"/>
        <dbReference type="ChEBI" id="CHEBI:57618"/>
        <dbReference type="ChEBI" id="CHEBI:57783"/>
        <dbReference type="ChEBI" id="CHEBI:58210"/>
        <dbReference type="ChEBI" id="CHEBI:58349"/>
    </reaction>
    <physiologicalReaction direction="right-to-left" evidence="5">
        <dbReference type="Rhea" id="RHEA:21626"/>
    </physiologicalReaction>
</comment>
<comment type="catalytic activity">
    <reaction evidence="13">
        <text>S-nitroso-CoA + L-cysteinyl-[protein] = S-nitroso-L-cysteinyl-[protein] + CoA</text>
        <dbReference type="Rhea" id="RHEA:78379"/>
        <dbReference type="Rhea" id="RHEA-COMP:10131"/>
        <dbReference type="Rhea" id="RHEA-COMP:17091"/>
        <dbReference type="ChEBI" id="CHEBI:29950"/>
        <dbReference type="ChEBI" id="CHEBI:57287"/>
        <dbReference type="ChEBI" id="CHEBI:145546"/>
        <dbReference type="ChEBI" id="CHEBI:149494"/>
    </reaction>
    <physiologicalReaction direction="left-to-right" evidence="13">
        <dbReference type="Rhea" id="RHEA:78380"/>
    </physiologicalReaction>
</comment>
<comment type="catalytic activity">
    <reaction evidence="13">
        <text>L-cysteinyl-[SCAN] + S-nitroso-CoA = S-nitroso-L-cysteinyl-[SCAN] + CoA</text>
        <dbReference type="Rhea" id="RHEA:78383"/>
        <dbReference type="Rhea" id="RHEA-COMP:19068"/>
        <dbReference type="Rhea" id="RHEA-COMP:19069"/>
        <dbReference type="ChEBI" id="CHEBI:29950"/>
        <dbReference type="ChEBI" id="CHEBI:57287"/>
        <dbReference type="ChEBI" id="CHEBI:145546"/>
        <dbReference type="ChEBI" id="CHEBI:149494"/>
    </reaction>
    <physiologicalReaction direction="left-to-right" evidence="13">
        <dbReference type="Rhea" id="RHEA:78384"/>
    </physiologicalReaction>
</comment>
<comment type="catalytic activity">
    <reaction evidence="13">
        <text>S-nitroso-L-cysteinyl-[SCAN] + L-cysteinyl-[protein] = L-cysteinyl-[SCAN] + S-nitroso-L-cysteinyl-[protein]</text>
        <dbReference type="Rhea" id="RHEA:78387"/>
        <dbReference type="Rhea" id="RHEA-COMP:10131"/>
        <dbReference type="Rhea" id="RHEA-COMP:17091"/>
        <dbReference type="Rhea" id="RHEA-COMP:19068"/>
        <dbReference type="Rhea" id="RHEA-COMP:19069"/>
        <dbReference type="ChEBI" id="CHEBI:29950"/>
        <dbReference type="ChEBI" id="CHEBI:149494"/>
    </reaction>
    <physiologicalReaction direction="left-to-right" evidence="13">
        <dbReference type="Rhea" id="RHEA:78388"/>
    </physiologicalReaction>
</comment>
<comment type="activity regulation">
    <text evidence="1 8 12">Mesobiliverdin acts as a competitive inhibitor for flavin reduction, indicating that flavin and tetrapyrrole substrates compete for the same site (PubMed:10620517). Inhibited by a wide range of xanthene-based drugs, such as phloxine B, erythrosin B, tamibarotene, sulfasalazine, olsalazine, febuxostat, ataluren (PTC124) and deferasirox (PubMed:29487133, PubMed:34957824).</text>
</comment>
<comment type="biophysicochemical properties">
    <kinetics>
        <KM evidence="1 14">36 uM for NADP</KM>
        <KM evidence="1 14">5.6 mM for NADH</KM>
        <KM evidence="1 14">0.3 uM for biliverdin IX-beta</KM>
        <KM evidence="1">52 uM for FMN</KM>
        <KM evidence="1">125 uM for FAD</KM>
        <KM evidence="1">53 uM for riboflavin</KM>
        <KM evidence="13">4 uM for S-nitroso-CoA</KM>
    </kinetics>
</comment>
<comment type="subunit">
    <text evidence="3">Monomer.</text>
</comment>
<comment type="interaction">
    <interactant intactId="EBI-2837485">
        <id>P30043</id>
    </interactant>
    <interactant intactId="EBI-8648654">
        <id>Q9UJ72</id>
        <label>ANXA10</label>
    </interactant>
    <organismsDiffer>false</organismsDiffer>
    <experiments>5</experiments>
</comment>
<comment type="subcellular location">
    <subcellularLocation>
        <location evidence="13 14">Cytoplasm</location>
    </subcellularLocation>
</comment>
<comment type="tissue specificity">
    <text evidence="10 14">Predominantly expressed in liver and erythrocytes (PubMed:7929092). At lower levels in heart, lung, adrenal gland and cerebrum (PubMed:7929092). Expressed in adult red blood cells (PubMed:29932944).</text>
</comment>
<comment type="similarity">
    <text evidence="23">Belongs to the BLVRB family.</text>
</comment>
<protein>
    <recommendedName>
        <fullName>Flavin reductase (NADPH)</fullName>
        <shortName>FR</shortName>
        <ecNumber evidence="1 5">1.5.1.30</ecNumber>
    </recommendedName>
    <alternativeName>
        <fullName evidence="19">Biliverdin reductase B</fullName>
        <shortName evidence="19">BVR-B</shortName>
        <ecNumber evidence="2 5 14">1.3.1.-</ecNumber>
    </alternativeName>
    <alternativeName>
        <fullName evidence="21">Biliverdin-IX beta-reductase</fullName>
    </alternativeName>
    <alternativeName>
        <fullName>Green heme-binding protein</fullName>
        <shortName>GHBP</shortName>
    </alternativeName>
    <alternativeName>
        <fullName>NADPH-dependent diaphorase</fullName>
    </alternativeName>
    <alternativeName>
        <fullName evidence="22">NADPH-flavin reductase</fullName>
        <shortName evidence="22">FLR</shortName>
    </alternativeName>
    <alternativeName>
        <fullName evidence="20">S-nitroso-CoA-assisted nitrosyltransferase</fullName>
        <shortName evidence="20">SNO-CoA-assisted nitrosyltransferase</shortName>
        <ecNumber evidence="13">2.6.99.-</ecNumber>
    </alternativeName>
</protein>
<dbReference type="EC" id="1.5.1.30" evidence="1 5"/>
<dbReference type="EC" id="1.3.1.-" evidence="2 5 14"/>
<dbReference type="EC" id="2.6.99.-" evidence="13"/>
<dbReference type="EMBL" id="D26308">
    <property type="protein sequence ID" value="BAA05370.1"/>
    <property type="molecule type" value="mRNA"/>
</dbReference>
<dbReference type="EMBL" id="D32143">
    <property type="protein sequence ID" value="BAA06874.1"/>
    <property type="molecule type" value="mRNA"/>
</dbReference>
<dbReference type="EMBL" id="AK312137">
    <property type="protein sequence ID" value="BAG35073.1"/>
    <property type="molecule type" value="mRNA"/>
</dbReference>
<dbReference type="EMBL" id="AY340485">
    <property type="protein sequence ID" value="AAP88933.1"/>
    <property type="molecule type" value="Genomic_DNA"/>
</dbReference>
<dbReference type="EMBL" id="AC010271">
    <property type="status" value="NOT_ANNOTATED_CDS"/>
    <property type="molecule type" value="Genomic_DNA"/>
</dbReference>
<dbReference type="EMBL" id="CH471126">
    <property type="protein sequence ID" value="EAW56969.1"/>
    <property type="molecule type" value="Genomic_DNA"/>
</dbReference>
<dbReference type="EMBL" id="BC109371">
    <property type="protein sequence ID" value="AAI09372.1"/>
    <property type="molecule type" value="mRNA"/>
</dbReference>
<dbReference type="CCDS" id="CCDS33029.1"/>
<dbReference type="PIR" id="JC2070">
    <property type="entry name" value="JC2070"/>
</dbReference>
<dbReference type="RefSeq" id="NP_000704.1">
    <property type="nucleotide sequence ID" value="NM_000713.3"/>
</dbReference>
<dbReference type="PDB" id="1HDO">
    <property type="method" value="X-ray"/>
    <property type="resolution" value="1.15 A"/>
    <property type="chains" value="A=2-205"/>
</dbReference>
<dbReference type="PDB" id="1HE2">
    <property type="method" value="X-ray"/>
    <property type="resolution" value="1.20 A"/>
    <property type="chains" value="A=2-205"/>
</dbReference>
<dbReference type="PDB" id="1HE3">
    <property type="method" value="X-ray"/>
    <property type="resolution" value="1.40 A"/>
    <property type="chains" value="A=2-205"/>
</dbReference>
<dbReference type="PDB" id="1HE4">
    <property type="method" value="X-ray"/>
    <property type="resolution" value="1.40 A"/>
    <property type="chains" value="A=2-205"/>
</dbReference>
<dbReference type="PDB" id="1HE5">
    <property type="method" value="X-ray"/>
    <property type="resolution" value="1.50 A"/>
    <property type="chains" value="A=2-205"/>
</dbReference>
<dbReference type="PDB" id="5OOG">
    <property type="method" value="X-ray"/>
    <property type="resolution" value="1.33 A"/>
    <property type="chains" value="A=1-206"/>
</dbReference>
<dbReference type="PDB" id="5OOH">
    <property type="method" value="X-ray"/>
    <property type="resolution" value="1.20 A"/>
    <property type="chains" value="A=1-206"/>
</dbReference>
<dbReference type="PDB" id="6OPL">
    <property type="method" value="X-ray"/>
    <property type="resolution" value="1.37 A"/>
    <property type="chains" value="A=1-205"/>
</dbReference>
<dbReference type="PDB" id="7ER6">
    <property type="method" value="X-ray"/>
    <property type="resolution" value="1.60 A"/>
    <property type="chains" value="A/B=1-206"/>
</dbReference>
<dbReference type="PDB" id="7ER7">
    <property type="method" value="X-ray"/>
    <property type="resolution" value="1.70 A"/>
    <property type="chains" value="A/B=1-206"/>
</dbReference>
<dbReference type="PDB" id="7ER8">
    <property type="method" value="X-ray"/>
    <property type="resolution" value="1.45 A"/>
    <property type="chains" value="A/B=1-206"/>
</dbReference>
<dbReference type="PDB" id="7ER9">
    <property type="method" value="X-ray"/>
    <property type="resolution" value="1.45 A"/>
    <property type="chains" value="A/B=1-206"/>
</dbReference>
<dbReference type="PDB" id="7ERA">
    <property type="method" value="X-ray"/>
    <property type="resolution" value="1.35 A"/>
    <property type="chains" value="A/B=1-206"/>
</dbReference>
<dbReference type="PDB" id="7ERB">
    <property type="method" value="X-ray"/>
    <property type="resolution" value="1.50 A"/>
    <property type="chains" value="A/B/C/D=1-206"/>
</dbReference>
<dbReference type="PDB" id="7ERC">
    <property type="method" value="X-ray"/>
    <property type="resolution" value="1.50 A"/>
    <property type="chains" value="A/B=1-206"/>
</dbReference>
<dbReference type="PDB" id="7ERD">
    <property type="method" value="X-ray"/>
    <property type="resolution" value="2.00 A"/>
    <property type="chains" value="A/B=1-206"/>
</dbReference>
<dbReference type="PDB" id="7ERE">
    <property type="method" value="X-ray"/>
    <property type="resolution" value="1.60 A"/>
    <property type="chains" value="A/B/C/D=1-206"/>
</dbReference>
<dbReference type="PDB" id="8ELL">
    <property type="method" value="X-ray"/>
    <property type="resolution" value="1.52 A"/>
    <property type="chains" value="A=1-206"/>
</dbReference>
<dbReference type="PDB" id="8ELM">
    <property type="method" value="X-ray"/>
    <property type="resolution" value="2.19 A"/>
    <property type="chains" value="A=1-206"/>
</dbReference>
<dbReference type="PDB" id="8K4K">
    <property type="method" value="X-ray"/>
    <property type="resolution" value="1.70 A"/>
    <property type="chains" value="A/B=1-206"/>
</dbReference>
<dbReference type="PDBsum" id="1HDO"/>
<dbReference type="PDBsum" id="1HE2"/>
<dbReference type="PDBsum" id="1HE3"/>
<dbReference type="PDBsum" id="1HE4"/>
<dbReference type="PDBsum" id="1HE5"/>
<dbReference type="PDBsum" id="5OOG"/>
<dbReference type="PDBsum" id="5OOH"/>
<dbReference type="PDBsum" id="6OPL"/>
<dbReference type="PDBsum" id="7ER6"/>
<dbReference type="PDBsum" id="7ER7"/>
<dbReference type="PDBsum" id="7ER8"/>
<dbReference type="PDBsum" id="7ER9"/>
<dbReference type="PDBsum" id="7ERA"/>
<dbReference type="PDBsum" id="7ERB"/>
<dbReference type="PDBsum" id="7ERC"/>
<dbReference type="PDBsum" id="7ERD"/>
<dbReference type="PDBsum" id="7ERE"/>
<dbReference type="PDBsum" id="8ELL"/>
<dbReference type="PDBsum" id="8ELM"/>
<dbReference type="PDBsum" id="8K4K"/>
<dbReference type="SMR" id="P30043"/>
<dbReference type="BioGRID" id="107114">
    <property type="interactions" value="56"/>
</dbReference>
<dbReference type="FunCoup" id="P30043">
    <property type="interactions" value="997"/>
</dbReference>
<dbReference type="IntAct" id="P30043">
    <property type="interactions" value="35"/>
</dbReference>
<dbReference type="STRING" id="9606.ENSP00000263368"/>
<dbReference type="BindingDB" id="P30043"/>
<dbReference type="ChEMBL" id="CHEMBL5019"/>
<dbReference type="DrugBank" id="DB02073">
    <property type="generic name" value="Biliverdine IX Alpha"/>
</dbReference>
<dbReference type="DrugBank" id="DB03247">
    <property type="generic name" value="Flavin mononucleotide"/>
</dbReference>
<dbReference type="DrugBank" id="DB04345">
    <property type="generic name" value="Lumichrome"/>
</dbReference>
<dbReference type="DrugBank" id="DB04363">
    <property type="generic name" value="Mesobiliverdin IV alpha"/>
</dbReference>
<dbReference type="DrugBank" id="DB09241">
    <property type="generic name" value="Methylene blue"/>
</dbReference>
<dbReference type="DrugBank" id="DB00157">
    <property type="generic name" value="NADH"/>
</dbReference>
<dbReference type="DrugBank" id="DB03461">
    <property type="generic name" value="Nicotinamide adenine dinucleotide phosphate"/>
</dbReference>
<dbReference type="DrugBank" id="DB00140">
    <property type="generic name" value="Riboflavin"/>
</dbReference>
<dbReference type="DrugCentral" id="P30043"/>
<dbReference type="GlyGen" id="P30043">
    <property type="glycosylation" value="1 site, 1 O-linked glycan (1 site)"/>
</dbReference>
<dbReference type="iPTMnet" id="P30043"/>
<dbReference type="MetOSite" id="P30043"/>
<dbReference type="PhosphoSitePlus" id="P30043"/>
<dbReference type="BioMuta" id="BLVRB"/>
<dbReference type="DMDM" id="1706870"/>
<dbReference type="REPRODUCTION-2DPAGE" id="IPI00783862"/>
<dbReference type="jPOST" id="P30043"/>
<dbReference type="MassIVE" id="P30043"/>
<dbReference type="PaxDb" id="9606-ENSP00000263368"/>
<dbReference type="PeptideAtlas" id="P30043"/>
<dbReference type="ProteomicsDB" id="54623"/>
<dbReference type="Pumba" id="P30043"/>
<dbReference type="TopDownProteomics" id="P30043"/>
<dbReference type="Antibodypedia" id="30531">
    <property type="antibodies" value="347 antibodies from 34 providers"/>
</dbReference>
<dbReference type="DNASU" id="645"/>
<dbReference type="Ensembl" id="ENST00000263368.9">
    <property type="protein sequence ID" value="ENSP00000263368.3"/>
    <property type="gene ID" value="ENSG00000090013.11"/>
</dbReference>
<dbReference type="GeneID" id="645"/>
<dbReference type="KEGG" id="hsa:645"/>
<dbReference type="MANE-Select" id="ENST00000263368.9">
    <property type="protein sequence ID" value="ENSP00000263368.3"/>
    <property type="RefSeq nucleotide sequence ID" value="NM_000713.3"/>
    <property type="RefSeq protein sequence ID" value="NP_000704.1"/>
</dbReference>
<dbReference type="AGR" id="HGNC:1063"/>
<dbReference type="CTD" id="645"/>
<dbReference type="DisGeNET" id="645"/>
<dbReference type="GeneCards" id="BLVRB"/>
<dbReference type="HGNC" id="HGNC:1063">
    <property type="gene designation" value="BLVRB"/>
</dbReference>
<dbReference type="HPA" id="ENSG00000090013">
    <property type="expression patterns" value="Tissue enhanced (bone)"/>
</dbReference>
<dbReference type="MIM" id="600941">
    <property type="type" value="gene"/>
</dbReference>
<dbReference type="neXtProt" id="NX_P30043"/>
<dbReference type="OpenTargets" id="ENSG00000090013"/>
<dbReference type="PharmGKB" id="PA25374"/>
<dbReference type="VEuPathDB" id="HostDB:ENSG00000090013"/>
<dbReference type="eggNOG" id="ENOG502RY9R">
    <property type="taxonomic scope" value="Eukaryota"/>
</dbReference>
<dbReference type="GeneTree" id="ENSGT00390000014810"/>
<dbReference type="HOGENOM" id="CLU_025711_2_0_1"/>
<dbReference type="InParanoid" id="P30043"/>
<dbReference type="OMA" id="ACKKIAI"/>
<dbReference type="OrthoDB" id="419598at2759"/>
<dbReference type="PAN-GO" id="P30043">
    <property type="GO annotations" value="2 GO annotations based on evolutionary models"/>
</dbReference>
<dbReference type="PhylomeDB" id="P30043"/>
<dbReference type="TreeFam" id="TF324063"/>
<dbReference type="BRENDA" id="1.3.1.24">
    <property type="organism ID" value="2681"/>
</dbReference>
<dbReference type="BRENDA" id="1.5.1.30">
    <property type="organism ID" value="2681"/>
</dbReference>
<dbReference type="PathwayCommons" id="P30043"/>
<dbReference type="Reactome" id="R-HSA-189483">
    <property type="pathway name" value="Heme degradation"/>
</dbReference>
<dbReference type="Reactome" id="R-HSA-9707564">
    <property type="pathway name" value="Cytoprotection by HMOX1"/>
</dbReference>
<dbReference type="SABIO-RK" id="P30043"/>
<dbReference type="SignaLink" id="P30043"/>
<dbReference type="SIGNOR" id="P30043"/>
<dbReference type="BioGRID-ORCS" id="645">
    <property type="hits" value="14 hits in 1175 CRISPR screens"/>
</dbReference>
<dbReference type="CD-CODE" id="FB4E32DD">
    <property type="entry name" value="Presynaptic clusters and postsynaptic densities"/>
</dbReference>
<dbReference type="ChiTaRS" id="BLVRB">
    <property type="organism name" value="human"/>
</dbReference>
<dbReference type="EvolutionaryTrace" id="P30043"/>
<dbReference type="GenomeRNAi" id="645"/>
<dbReference type="Pharos" id="P30043">
    <property type="development level" value="Tbio"/>
</dbReference>
<dbReference type="PRO" id="PR:P30043"/>
<dbReference type="Proteomes" id="UP000005640">
    <property type="component" value="Chromosome 19"/>
</dbReference>
<dbReference type="RNAct" id="P30043">
    <property type="molecule type" value="protein"/>
</dbReference>
<dbReference type="Bgee" id="ENSG00000090013">
    <property type="expression patterns" value="Expressed in trabecular bone tissue and 202 other cell types or tissues"/>
</dbReference>
<dbReference type="ExpressionAtlas" id="P30043">
    <property type="expression patterns" value="baseline and differential"/>
</dbReference>
<dbReference type="GO" id="GO:0005737">
    <property type="term" value="C:cytoplasm"/>
    <property type="evidence" value="ECO:0000314"/>
    <property type="project" value="UniProtKB"/>
</dbReference>
<dbReference type="GO" id="GO:0005829">
    <property type="term" value="C:cytosol"/>
    <property type="evidence" value="ECO:0000314"/>
    <property type="project" value="UniProtKB"/>
</dbReference>
<dbReference type="GO" id="GO:0070062">
    <property type="term" value="C:extracellular exosome"/>
    <property type="evidence" value="ECO:0007005"/>
    <property type="project" value="UniProtKB"/>
</dbReference>
<dbReference type="GO" id="GO:0043231">
    <property type="term" value="C:intracellular membrane-bounded organelle"/>
    <property type="evidence" value="ECO:0000314"/>
    <property type="project" value="HPA"/>
</dbReference>
<dbReference type="GO" id="GO:0005654">
    <property type="term" value="C:nucleoplasm"/>
    <property type="evidence" value="ECO:0000314"/>
    <property type="project" value="HPA"/>
</dbReference>
<dbReference type="GO" id="GO:0005886">
    <property type="term" value="C:plasma membrane"/>
    <property type="evidence" value="ECO:0000314"/>
    <property type="project" value="HPA"/>
</dbReference>
<dbReference type="GO" id="GO:0004074">
    <property type="term" value="F:biliverdin reductase [NAD(P)+] activity"/>
    <property type="evidence" value="ECO:0000314"/>
    <property type="project" value="UniProtKB"/>
</dbReference>
<dbReference type="GO" id="GO:0052874">
    <property type="term" value="F:FMN reductase (NADH) activity"/>
    <property type="evidence" value="ECO:0007669"/>
    <property type="project" value="RHEA"/>
</dbReference>
<dbReference type="GO" id="GO:0052873">
    <property type="term" value="F:FMN reductase (NADPH) activity"/>
    <property type="evidence" value="ECO:0007669"/>
    <property type="project" value="RHEA"/>
</dbReference>
<dbReference type="GO" id="GO:0035605">
    <property type="term" value="F:peptidyl-cysteine S-nitrosylase activity"/>
    <property type="evidence" value="ECO:0000314"/>
    <property type="project" value="UniProtKB"/>
</dbReference>
<dbReference type="GO" id="GO:0042602">
    <property type="term" value="F:riboflavin reductase (NADPH) activity"/>
    <property type="evidence" value="ECO:0000314"/>
    <property type="project" value="UniProtKB"/>
</dbReference>
<dbReference type="GO" id="GO:0042167">
    <property type="term" value="P:heme catabolic process"/>
    <property type="evidence" value="ECO:0000314"/>
    <property type="project" value="UniProtKB"/>
</dbReference>
<dbReference type="GO" id="GO:0030219">
    <property type="term" value="P:megakaryocyte differentiation"/>
    <property type="evidence" value="ECO:0000315"/>
    <property type="project" value="UniProtKB"/>
</dbReference>
<dbReference type="GO" id="GO:0046627">
    <property type="term" value="P:negative regulation of insulin receptor signaling pathway"/>
    <property type="evidence" value="ECO:0000314"/>
    <property type="project" value="UniProtKB"/>
</dbReference>
<dbReference type="CDD" id="cd05244">
    <property type="entry name" value="BVR-B_like_SDR_a"/>
    <property type="match status" value="1"/>
</dbReference>
<dbReference type="FunFam" id="3.40.50.720:FF:000369">
    <property type="entry name" value="flavin reductase (NADPH)"/>
    <property type="match status" value="1"/>
</dbReference>
<dbReference type="Gene3D" id="3.40.50.720">
    <property type="entry name" value="NAD(P)-binding Rossmann-like Domain"/>
    <property type="match status" value="1"/>
</dbReference>
<dbReference type="InterPro" id="IPR016040">
    <property type="entry name" value="NAD(P)-bd_dom"/>
</dbReference>
<dbReference type="InterPro" id="IPR036291">
    <property type="entry name" value="NAD(P)-bd_dom_sf"/>
</dbReference>
<dbReference type="InterPro" id="IPR051606">
    <property type="entry name" value="Polyketide_Oxido-like"/>
</dbReference>
<dbReference type="PANTHER" id="PTHR43355">
    <property type="entry name" value="FLAVIN REDUCTASE (NADPH)"/>
    <property type="match status" value="1"/>
</dbReference>
<dbReference type="PANTHER" id="PTHR43355:SF2">
    <property type="entry name" value="FLAVIN REDUCTASE (NADPH)"/>
    <property type="match status" value="1"/>
</dbReference>
<dbReference type="Pfam" id="PF13460">
    <property type="entry name" value="NAD_binding_10"/>
    <property type="match status" value="1"/>
</dbReference>
<dbReference type="SUPFAM" id="SSF51735">
    <property type="entry name" value="NAD(P)-binding Rossmann-fold domains"/>
    <property type="match status" value="1"/>
</dbReference>
<proteinExistence type="evidence at protein level"/>
<sequence>MAVKKIAIFGATGQTGLTTLAQAVQAGYEVTVLVRDSSRLPSEGPRPAHVVVGDVLQAADVDKTVAGQDAVIVLLGTRNDLSPTTVMSEGARNIVAAMKAHGVDKVVACTSAFLLWDPTKVPPRLQAVTDDHIRMHKVLRESGLKYVAVMPPHIGDQPLTGAYTVTLDGRGPSRVISKHDLGHFMLRCLTTDEYDGHSTYPSHQYQ</sequence>
<feature type="initiator methionine" description="Removed" evidence="4 14 15 16 17">
    <location>
        <position position="1"/>
    </location>
</feature>
<feature type="chain" id="PRO_0000064948" description="Flavin reductase (NADPH)">
    <location>
        <begin position="2"/>
        <end position="206"/>
    </location>
</feature>
<feature type="active site" description="S-nitroso-cysteine intermediate; for S-nitroso-CoA-dependent nitrosyltransferase activity" evidence="13">
    <location>
        <position position="109"/>
    </location>
</feature>
<feature type="active site" description="S-nitroso-cysteine intermediate; for S-nitroso-CoA-dependent nitrosyltransferase activity" evidence="13">
    <location>
        <position position="188"/>
    </location>
</feature>
<feature type="binding site" evidence="3 8 12 25 30 31 34">
    <location>
        <position position="10"/>
    </location>
    <ligand>
        <name>NADP(+)</name>
        <dbReference type="ChEBI" id="CHEBI:58349"/>
    </ligand>
</feature>
<feature type="binding site" evidence="3 8 11 12 25 26 27 28 29 30 31 32 33 34 35 36 37 38 39 40 41">
    <location>
        <position position="12"/>
    </location>
    <ligand>
        <name>NADP(+)</name>
        <dbReference type="ChEBI" id="CHEBI:58349"/>
    </ligand>
</feature>
<feature type="binding site" evidence="3 11 12 25 26 27 28 29 30 31 32 33 34 35 36 37 38 39 40 41">
    <location>
        <position position="13"/>
    </location>
    <ligand>
        <name>NADP(+)</name>
        <dbReference type="ChEBI" id="CHEBI:58349"/>
    </ligand>
</feature>
<feature type="binding site" evidence="3 8 12 25 26 27 28 29 30 31 33 34 35 36 37 38 39 40 41">
    <location>
        <position position="14"/>
    </location>
    <ligand>
        <name>NADP(+)</name>
        <dbReference type="ChEBI" id="CHEBI:58349"/>
    </ligand>
</feature>
<feature type="binding site" evidence="3 8 11 12 25 26 27 28 29 30 31 32 33 34 35 36 37 38 39 40 41">
    <location>
        <position position="15"/>
    </location>
    <ligand>
        <name>NADP(+)</name>
        <dbReference type="ChEBI" id="CHEBI:58349"/>
    </ligand>
</feature>
<feature type="binding site" evidence="3 8 11 12 25 26 27 28 29 30 31 32 33 34 35 36 37 38 39 40 41">
    <location>
        <position position="35"/>
    </location>
    <ligand>
        <name>NADP(+)</name>
        <dbReference type="ChEBI" id="CHEBI:58349"/>
    </ligand>
</feature>
<feature type="binding site" evidence="12 33 36 37 38 40 41">
    <location>
        <position position="38"/>
    </location>
    <ligand>
        <name>NADP(+)</name>
        <dbReference type="ChEBI" id="CHEBI:58349"/>
    </ligand>
</feature>
<feature type="binding site" evidence="8 11 12 31 32 33 34 35 36 37 38 39 41">
    <location>
        <position position="39"/>
    </location>
    <ligand>
        <name>NADP(+)</name>
        <dbReference type="ChEBI" id="CHEBI:58349"/>
    </ligand>
</feature>
<feature type="binding site" evidence="3 8 11 12 25 26 27 28 29 30 31 32 33 34 35 36 37 38 39 40 41">
    <location>
        <position position="54"/>
    </location>
    <ligand>
        <name>NADP(+)</name>
        <dbReference type="ChEBI" id="CHEBI:58349"/>
    </ligand>
</feature>
<feature type="binding site" evidence="3 8 11 12 25 26 27 28 29 30 31 32 33 34 35 36 37 38 39 40 41">
    <location>
        <position position="55"/>
    </location>
    <ligand>
        <name>NADP(+)</name>
        <dbReference type="ChEBI" id="CHEBI:58349"/>
    </ligand>
</feature>
<feature type="binding site" evidence="3 11 12 25 26 27 28 29 32 33 34 35 36 37 38 39 40 41">
    <location>
        <position position="75"/>
    </location>
    <ligand>
        <name>NADP(+)</name>
        <dbReference type="ChEBI" id="CHEBI:58349"/>
    </ligand>
</feature>
<feature type="binding site" evidence="3 8 11 12 25 26 27 28 29 30 31 32 33 34 35 36 37 38 39 40 41">
    <location>
        <position position="76"/>
    </location>
    <ligand>
        <name>NADP(+)</name>
        <dbReference type="ChEBI" id="CHEBI:58349"/>
    </ligand>
</feature>
<feature type="binding site" evidence="3 8 11 12 25 26 27 28 29 30 31 32 33 34 35 36 37 38 39 40 41">
    <location>
        <position position="78"/>
    </location>
    <ligand>
        <name>NADP(+)</name>
        <dbReference type="ChEBI" id="CHEBI:58349"/>
    </ligand>
</feature>
<feature type="binding site" evidence="3 8 11 12 25 26 27 28 29 30 31 32 33 34 35 36 37 38 39 40 41">
    <location>
        <position position="87"/>
    </location>
    <ligand>
        <name>NADP(+)</name>
        <dbReference type="ChEBI" id="CHEBI:58349"/>
    </ligand>
</feature>
<feature type="binding site" evidence="3 8 11 12 25 26 27 28 29 31 32 33 34 35 36 37 38 39 40 41">
    <location>
        <position position="109"/>
    </location>
    <ligand>
        <name>NADP(+)</name>
        <dbReference type="ChEBI" id="CHEBI:58349"/>
    </ligand>
</feature>
<feature type="binding site" evidence="3 8 11 12 27 30 31 32 35 36 38 39">
    <location>
        <position position="132"/>
    </location>
    <ligand>
        <name>NADP(+)</name>
        <dbReference type="ChEBI" id="CHEBI:58349"/>
    </ligand>
</feature>
<feature type="binding site" evidence="11 12 32 38 40">
    <location>
        <position position="153"/>
    </location>
    <ligand>
        <name>NADP(+)</name>
        <dbReference type="ChEBI" id="CHEBI:58349"/>
    </ligand>
</feature>
<feature type="binding site" evidence="3 8 12 25 26 27 28 29 30 31 33 34 35 36 37 38 39 40 41">
    <location>
        <position position="154"/>
    </location>
    <ligand>
        <name>NADP(+)</name>
        <dbReference type="ChEBI" id="CHEBI:58349"/>
    </ligand>
</feature>
<feature type="modified residue" description="Phosphoserine" evidence="45">
    <location>
        <position position="42"/>
    </location>
</feature>
<feature type="modified residue" description="Phosphoserine" evidence="44">
    <location>
        <position position="82"/>
    </location>
</feature>
<feature type="sequence variant" id="VAR_019168" description="In dbSNP:rs11547746." evidence="18">
    <original>R</original>
    <variation>Q</variation>
    <location>
        <position position="46"/>
    </location>
</feature>
<feature type="sequence variant" id="VAR_088973" description="Risk factor for thrombocytosis; enhanced generation of reactive oxygen species (ROS) leading to impaired megakaryocyte differentiation; abolished NAD(P)H-dependent reductase activity; dbSNP:rs149698066." evidence="6 7">
    <original>S</original>
    <variation>L</variation>
    <location>
        <position position="111"/>
    </location>
</feature>
<feature type="mutagenesis site" description="Abolished binding to NAD(P)H and S-nitroso-CoA, leading to abolished NAD(P)H-dependent reductase and a S-nitroso-CoA-dependent nitrosyltransferase activities." evidence="13">
    <original>QTG</original>
    <variation>NAA</variation>
    <location>
        <begin position="14"/>
        <end position="16"/>
    </location>
</feature>
<feature type="mutagenesis site" description="Increased affinity for coenzyme A." evidence="11">
    <original>Q</original>
    <variation>R</variation>
    <location>
        <position position="14"/>
    </location>
</feature>
<feature type="mutagenesis site" description="Induces both an increase in active site micro-millisecond motions and an increase in the rate constants of coenzyme-binding." evidence="10">
    <original>R</original>
    <variation>A</variation>
    <location>
        <position position="78"/>
    </location>
</feature>
<feature type="mutagenesis site" description="Decreased affinity for coenzyme A." evidence="11">
    <original>R</original>
    <variation>G</variation>
    <location>
        <position position="78"/>
    </location>
</feature>
<feature type="mutagenesis site" description="Abolished S-nitroso-CoA-dependent nitrosyltransferase activity; when associated with R-188." evidence="13">
    <original>C</original>
    <variation>R</variation>
    <location>
        <position position="109"/>
    </location>
</feature>
<feature type="mutagenesis site" description="Abolished NAD(P)H-dependent reductase activity." evidence="7">
    <original>S</original>
    <variation>A</variation>
    <location>
        <position position="111"/>
    </location>
</feature>
<feature type="mutagenesis site" description="Reduced affinity for biliverdin." evidence="5">
    <original>H</original>
    <variation>A</variation>
    <location>
        <position position="153"/>
    </location>
</feature>
<feature type="mutagenesis site" description="Abolished S-nitroso-CoA-dependent nitrosyltransferase activity; when associated with R-109." evidence="13">
    <original>C</original>
    <variation>R</variation>
    <location>
        <position position="188"/>
    </location>
</feature>
<feature type="sequence conflict" description="In Ref. 9; AA sequence." evidence="23" ref="9">
    <original>G</original>
    <variation>C</variation>
    <location>
        <position position="16"/>
    </location>
</feature>
<feature type="strand" evidence="46">
    <location>
        <begin position="5"/>
        <end position="10"/>
    </location>
</feature>
<feature type="helix" evidence="46">
    <location>
        <begin position="14"/>
        <end position="25"/>
    </location>
</feature>
<feature type="strand" evidence="46">
    <location>
        <begin position="29"/>
        <end position="35"/>
    </location>
</feature>
<feature type="helix" evidence="46">
    <location>
        <begin position="37"/>
        <end position="39"/>
    </location>
</feature>
<feature type="strand" evidence="46">
    <location>
        <begin position="42"/>
        <end position="44"/>
    </location>
</feature>
<feature type="strand" evidence="46">
    <location>
        <begin position="48"/>
        <end position="53"/>
    </location>
</feature>
<feature type="helix" evidence="46">
    <location>
        <begin position="58"/>
        <end position="65"/>
    </location>
</feature>
<feature type="strand" evidence="46">
    <location>
        <begin position="69"/>
        <end position="73"/>
    </location>
</feature>
<feature type="helix" evidence="46">
    <location>
        <begin position="86"/>
        <end position="101"/>
    </location>
</feature>
<feature type="strand" evidence="46">
    <location>
        <begin position="105"/>
        <end position="109"/>
    </location>
</feature>
<feature type="helix" evidence="46">
    <location>
        <begin position="112"/>
        <end position="114"/>
    </location>
</feature>
<feature type="helix" evidence="47">
    <location>
        <begin position="118"/>
        <end position="120"/>
    </location>
</feature>
<feature type="helix" evidence="46">
    <location>
        <begin position="123"/>
        <end position="125"/>
    </location>
</feature>
<feature type="helix" evidence="46">
    <location>
        <begin position="126"/>
        <end position="141"/>
    </location>
</feature>
<feature type="strand" evidence="46">
    <location>
        <begin position="144"/>
        <end position="149"/>
    </location>
</feature>
<feature type="strand" evidence="46">
    <location>
        <begin position="152"/>
        <end position="155"/>
    </location>
</feature>
<feature type="strand" evidence="46">
    <location>
        <begin position="164"/>
        <end position="169"/>
    </location>
</feature>
<feature type="strand" evidence="46">
    <location>
        <begin position="174"/>
        <end position="177"/>
    </location>
</feature>
<feature type="helix" evidence="46">
    <location>
        <begin position="178"/>
        <end position="187"/>
    </location>
</feature>
<feature type="helix" evidence="47">
    <location>
        <begin position="188"/>
        <end position="190"/>
    </location>
</feature>
<feature type="turn" evidence="46">
    <location>
        <begin position="193"/>
        <end position="196"/>
    </location>
</feature>
<feature type="strand" evidence="46">
    <location>
        <begin position="198"/>
        <end position="202"/>
    </location>
</feature>
<accession>P30043</accession>
<accession>A6NKD8</accession>
<accession>B2R5C6</accession>
<accession>P32078</accession>
<accession>P53005</accession>
<accession>Q32LZ2</accession>
<organism>
    <name type="scientific">Homo sapiens</name>
    <name type="common">Human</name>
    <dbReference type="NCBI Taxonomy" id="9606"/>
    <lineage>
        <taxon>Eukaryota</taxon>
        <taxon>Metazoa</taxon>
        <taxon>Chordata</taxon>
        <taxon>Craniata</taxon>
        <taxon>Vertebrata</taxon>
        <taxon>Euteleostomi</taxon>
        <taxon>Mammalia</taxon>
        <taxon>Eutheria</taxon>
        <taxon>Euarchontoglires</taxon>
        <taxon>Primates</taxon>
        <taxon>Haplorrhini</taxon>
        <taxon>Catarrhini</taxon>
        <taxon>Hominidae</taxon>
        <taxon>Homo</taxon>
    </lineage>
</organism>
<reference key="1">
    <citation type="journal article" date="1994" name="Biochem. Biophys. Res. Commun.">
        <title>Cloning and nucleotide sequence of a cDNA of the human erythrocyte NADPH-flavin reductase.</title>
        <authorList>
            <person name="Chikuba K."/>
            <person name="Yubisui T."/>
            <person name="Shirabe K."/>
            <person name="Takeshita M."/>
        </authorList>
    </citation>
    <scope>NUCLEOTIDE SEQUENCE [MRNA]</scope>
    <scope>PROTEIN SEQUENCE OF 2-34; 63-87 AND 98-206</scope>
    <source>
        <tissue>Erythrocyte</tissue>
        <tissue>Reticulocyte</tissue>
    </source>
</reference>
<reference key="2">
    <citation type="journal article" date="1996" name="Biol. Pharm. Bull.">
        <title>Molecular cloning and expression of human liver biliverdin-IXbeta reductase.</title>
        <authorList>
            <person name="Komuro A."/>
            <person name="Tobe T."/>
            <person name="Hashimoto K."/>
            <person name="Nakano Y."/>
            <person name="Yamaguchi T."/>
            <person name="Nakajima H."/>
            <person name="Tomita M."/>
        </authorList>
    </citation>
    <scope>NUCLEOTIDE SEQUENCE [MRNA]</scope>
    <source>
        <tissue>Liver</tissue>
    </source>
</reference>
<reference key="3">
    <citation type="journal article" date="2004" name="Nat. Genet.">
        <title>Complete sequencing and characterization of 21,243 full-length human cDNAs.</title>
        <authorList>
            <person name="Ota T."/>
            <person name="Suzuki Y."/>
            <person name="Nishikawa T."/>
            <person name="Otsuki T."/>
            <person name="Sugiyama T."/>
            <person name="Irie R."/>
            <person name="Wakamatsu A."/>
            <person name="Hayashi K."/>
            <person name="Sato H."/>
            <person name="Nagai K."/>
            <person name="Kimura K."/>
            <person name="Makita H."/>
            <person name="Sekine M."/>
            <person name="Obayashi M."/>
            <person name="Nishi T."/>
            <person name="Shibahara T."/>
            <person name="Tanaka T."/>
            <person name="Ishii S."/>
            <person name="Yamamoto J."/>
            <person name="Saito K."/>
            <person name="Kawai Y."/>
            <person name="Isono Y."/>
            <person name="Nakamura Y."/>
            <person name="Nagahari K."/>
            <person name="Murakami K."/>
            <person name="Yasuda T."/>
            <person name="Iwayanagi T."/>
            <person name="Wagatsuma M."/>
            <person name="Shiratori A."/>
            <person name="Sudo H."/>
            <person name="Hosoiri T."/>
            <person name="Kaku Y."/>
            <person name="Kodaira H."/>
            <person name="Kondo H."/>
            <person name="Sugawara M."/>
            <person name="Takahashi M."/>
            <person name="Kanda K."/>
            <person name="Yokoi T."/>
            <person name="Furuya T."/>
            <person name="Kikkawa E."/>
            <person name="Omura Y."/>
            <person name="Abe K."/>
            <person name="Kamihara K."/>
            <person name="Katsuta N."/>
            <person name="Sato K."/>
            <person name="Tanikawa M."/>
            <person name="Yamazaki M."/>
            <person name="Ninomiya K."/>
            <person name="Ishibashi T."/>
            <person name="Yamashita H."/>
            <person name="Murakawa K."/>
            <person name="Fujimori K."/>
            <person name="Tanai H."/>
            <person name="Kimata M."/>
            <person name="Watanabe M."/>
            <person name="Hiraoka S."/>
            <person name="Chiba Y."/>
            <person name="Ishida S."/>
            <person name="Ono Y."/>
            <person name="Takiguchi S."/>
            <person name="Watanabe S."/>
            <person name="Yosida M."/>
            <person name="Hotuta T."/>
            <person name="Kusano J."/>
            <person name="Kanehori K."/>
            <person name="Takahashi-Fujii A."/>
            <person name="Hara H."/>
            <person name="Tanase T.-O."/>
            <person name="Nomura Y."/>
            <person name="Togiya S."/>
            <person name="Komai F."/>
            <person name="Hara R."/>
            <person name="Takeuchi K."/>
            <person name="Arita M."/>
            <person name="Imose N."/>
            <person name="Musashino K."/>
            <person name="Yuuki H."/>
            <person name="Oshima A."/>
            <person name="Sasaki N."/>
            <person name="Aotsuka S."/>
            <person name="Yoshikawa Y."/>
            <person name="Matsunawa H."/>
            <person name="Ichihara T."/>
            <person name="Shiohata N."/>
            <person name="Sano S."/>
            <person name="Moriya S."/>
            <person name="Momiyama H."/>
            <person name="Satoh N."/>
            <person name="Takami S."/>
            <person name="Terashima Y."/>
            <person name="Suzuki O."/>
            <person name="Nakagawa S."/>
            <person name="Senoh A."/>
            <person name="Mizoguchi H."/>
            <person name="Goto Y."/>
            <person name="Shimizu F."/>
            <person name="Wakebe H."/>
            <person name="Hishigaki H."/>
            <person name="Watanabe T."/>
            <person name="Sugiyama A."/>
            <person name="Takemoto M."/>
            <person name="Kawakami B."/>
            <person name="Yamazaki M."/>
            <person name="Watanabe K."/>
            <person name="Kumagai A."/>
            <person name="Itakura S."/>
            <person name="Fukuzumi Y."/>
            <person name="Fujimori Y."/>
            <person name="Komiyama M."/>
            <person name="Tashiro H."/>
            <person name="Tanigami A."/>
            <person name="Fujiwara T."/>
            <person name="Ono T."/>
            <person name="Yamada K."/>
            <person name="Fujii Y."/>
            <person name="Ozaki K."/>
            <person name="Hirao M."/>
            <person name="Ohmori Y."/>
            <person name="Kawabata A."/>
            <person name="Hikiji T."/>
            <person name="Kobatake N."/>
            <person name="Inagaki H."/>
            <person name="Ikema Y."/>
            <person name="Okamoto S."/>
            <person name="Okitani R."/>
            <person name="Kawakami T."/>
            <person name="Noguchi S."/>
            <person name="Itoh T."/>
            <person name="Shigeta K."/>
            <person name="Senba T."/>
            <person name="Matsumura K."/>
            <person name="Nakajima Y."/>
            <person name="Mizuno T."/>
            <person name="Morinaga M."/>
            <person name="Sasaki M."/>
            <person name="Togashi T."/>
            <person name="Oyama M."/>
            <person name="Hata H."/>
            <person name="Watanabe M."/>
            <person name="Komatsu T."/>
            <person name="Mizushima-Sugano J."/>
            <person name="Satoh T."/>
            <person name="Shirai Y."/>
            <person name="Takahashi Y."/>
            <person name="Nakagawa K."/>
            <person name="Okumura K."/>
            <person name="Nagase T."/>
            <person name="Nomura N."/>
            <person name="Kikuchi H."/>
            <person name="Masuho Y."/>
            <person name="Yamashita R."/>
            <person name="Nakai K."/>
            <person name="Yada T."/>
            <person name="Nakamura Y."/>
            <person name="Ohara O."/>
            <person name="Isogai T."/>
            <person name="Sugano S."/>
        </authorList>
    </citation>
    <scope>NUCLEOTIDE SEQUENCE [LARGE SCALE MRNA]</scope>
    <source>
        <tissue>Cerebellum</tissue>
    </source>
</reference>
<reference key="4">
    <citation type="submission" date="2003-07" db="EMBL/GenBank/DDBJ databases">
        <authorList>
            <consortium name="NIEHS SNPs program"/>
        </authorList>
    </citation>
    <scope>NUCLEOTIDE SEQUENCE [GENOMIC DNA]</scope>
    <scope>VARIANT GLN-46</scope>
</reference>
<reference key="5">
    <citation type="journal article" date="2004" name="Nature">
        <title>The DNA sequence and biology of human chromosome 19.</title>
        <authorList>
            <person name="Grimwood J."/>
            <person name="Gordon L.A."/>
            <person name="Olsen A.S."/>
            <person name="Terry A."/>
            <person name="Schmutz J."/>
            <person name="Lamerdin J.E."/>
            <person name="Hellsten U."/>
            <person name="Goodstein D."/>
            <person name="Couronne O."/>
            <person name="Tran-Gyamfi M."/>
            <person name="Aerts A."/>
            <person name="Altherr M."/>
            <person name="Ashworth L."/>
            <person name="Bajorek E."/>
            <person name="Black S."/>
            <person name="Branscomb E."/>
            <person name="Caenepeel S."/>
            <person name="Carrano A.V."/>
            <person name="Caoile C."/>
            <person name="Chan Y.M."/>
            <person name="Christensen M."/>
            <person name="Cleland C.A."/>
            <person name="Copeland A."/>
            <person name="Dalin E."/>
            <person name="Dehal P."/>
            <person name="Denys M."/>
            <person name="Detter J.C."/>
            <person name="Escobar J."/>
            <person name="Flowers D."/>
            <person name="Fotopulos D."/>
            <person name="Garcia C."/>
            <person name="Georgescu A.M."/>
            <person name="Glavina T."/>
            <person name="Gomez M."/>
            <person name="Gonzales E."/>
            <person name="Groza M."/>
            <person name="Hammon N."/>
            <person name="Hawkins T."/>
            <person name="Haydu L."/>
            <person name="Ho I."/>
            <person name="Huang W."/>
            <person name="Israni S."/>
            <person name="Jett J."/>
            <person name="Kadner K."/>
            <person name="Kimball H."/>
            <person name="Kobayashi A."/>
            <person name="Larionov V."/>
            <person name="Leem S.-H."/>
            <person name="Lopez F."/>
            <person name="Lou Y."/>
            <person name="Lowry S."/>
            <person name="Malfatti S."/>
            <person name="Martinez D."/>
            <person name="McCready P.M."/>
            <person name="Medina C."/>
            <person name="Morgan J."/>
            <person name="Nelson K."/>
            <person name="Nolan M."/>
            <person name="Ovcharenko I."/>
            <person name="Pitluck S."/>
            <person name="Pollard M."/>
            <person name="Popkie A.P."/>
            <person name="Predki P."/>
            <person name="Quan G."/>
            <person name="Ramirez L."/>
            <person name="Rash S."/>
            <person name="Retterer J."/>
            <person name="Rodriguez A."/>
            <person name="Rogers S."/>
            <person name="Salamov A."/>
            <person name="Salazar A."/>
            <person name="She X."/>
            <person name="Smith D."/>
            <person name="Slezak T."/>
            <person name="Solovyev V."/>
            <person name="Thayer N."/>
            <person name="Tice H."/>
            <person name="Tsai M."/>
            <person name="Ustaszewska A."/>
            <person name="Vo N."/>
            <person name="Wagner M."/>
            <person name="Wheeler J."/>
            <person name="Wu K."/>
            <person name="Xie G."/>
            <person name="Yang J."/>
            <person name="Dubchak I."/>
            <person name="Furey T.S."/>
            <person name="DeJong P."/>
            <person name="Dickson M."/>
            <person name="Gordon D."/>
            <person name="Eichler E.E."/>
            <person name="Pennacchio L.A."/>
            <person name="Richardson P."/>
            <person name="Stubbs L."/>
            <person name="Rokhsar D.S."/>
            <person name="Myers R.M."/>
            <person name="Rubin E.M."/>
            <person name="Lucas S.M."/>
        </authorList>
    </citation>
    <scope>NUCLEOTIDE SEQUENCE [LARGE SCALE GENOMIC DNA]</scope>
</reference>
<reference key="6">
    <citation type="submission" date="2005-07" db="EMBL/GenBank/DDBJ databases">
        <authorList>
            <person name="Mural R.J."/>
            <person name="Istrail S."/>
            <person name="Sutton G.G."/>
            <person name="Florea L."/>
            <person name="Halpern A.L."/>
            <person name="Mobarry C.M."/>
            <person name="Lippert R."/>
            <person name="Walenz B."/>
            <person name="Shatkay H."/>
            <person name="Dew I."/>
            <person name="Miller J.R."/>
            <person name="Flanigan M.J."/>
            <person name="Edwards N.J."/>
            <person name="Bolanos R."/>
            <person name="Fasulo D."/>
            <person name="Halldorsson B.V."/>
            <person name="Hannenhalli S."/>
            <person name="Turner R."/>
            <person name="Yooseph S."/>
            <person name="Lu F."/>
            <person name="Nusskern D.R."/>
            <person name="Shue B.C."/>
            <person name="Zheng X.H."/>
            <person name="Zhong F."/>
            <person name="Delcher A.L."/>
            <person name="Huson D.H."/>
            <person name="Kravitz S.A."/>
            <person name="Mouchard L."/>
            <person name="Reinert K."/>
            <person name="Remington K.A."/>
            <person name="Clark A.G."/>
            <person name="Waterman M.S."/>
            <person name="Eichler E.E."/>
            <person name="Adams M.D."/>
            <person name="Hunkapiller M.W."/>
            <person name="Myers E.W."/>
            <person name="Venter J.C."/>
        </authorList>
    </citation>
    <scope>NUCLEOTIDE SEQUENCE [LARGE SCALE GENOMIC DNA]</scope>
</reference>
<reference key="7">
    <citation type="journal article" date="2004" name="Genome Res.">
        <title>The status, quality, and expansion of the NIH full-length cDNA project: the Mammalian Gene Collection (MGC).</title>
        <authorList>
            <consortium name="The MGC Project Team"/>
        </authorList>
    </citation>
    <scope>NUCLEOTIDE SEQUENCE [LARGE SCALE MRNA]</scope>
    <source>
        <tissue>Pancreas</tissue>
    </source>
</reference>
<reference key="8">
    <citation type="journal article" date="1993" name="Biochem. Biophys. Res. Commun.">
        <title>Complete amino acid sequence of biliverdin-IX beta reductase from human liver.</title>
        <authorList>
            <person name="Yamaguchi T."/>
            <person name="Komuro A."/>
            <person name="Nakano Y."/>
            <person name="Tomita M."/>
            <person name="Nakajima H."/>
        </authorList>
    </citation>
    <scope>PROTEIN SEQUENCE OF 2-205</scope>
    <source>
        <tissue>Liver</tissue>
    </source>
</reference>
<reference key="9">
    <citation type="journal article" date="1994" name="J. Biol. Chem.">
        <title>Biliverdin-IX alpha reductase and biliverdin-IX beta reductase from human liver. Purification and characterization.</title>
        <authorList>
            <person name="Yamaguchi T."/>
            <person name="Komoda Y."/>
            <person name="Nakajima H."/>
        </authorList>
    </citation>
    <scope>PROTEIN SEQUENCE OF 2-21</scope>
    <scope>FUNCTION</scope>
    <scope>SUBUNIT</scope>
    <scope>CATALYTIC ACTIVITY</scope>
    <scope>SUBCELLULAR LOCATION</scope>
    <scope>BIOPHYSICOCHEMICAL PROPERTIES</scope>
    <scope>TISSUE SPECIFICITY</scope>
    <source>
        <tissue>Liver</tissue>
    </source>
</reference>
<reference key="10">
    <citation type="journal article" date="1992" name="Electrophoresis">
        <title>Human liver protein map: a reference database established by microsequencing and gel comparison.</title>
        <authorList>
            <person name="Hochstrasser D.F."/>
            <person name="Frutiger S."/>
            <person name="Paquet N."/>
            <person name="Bairoch A."/>
            <person name="Ravier F."/>
            <person name="Pasquali C."/>
            <person name="Sanchez J.-C."/>
            <person name="Tissot J.-D."/>
            <person name="Bjellqvist B."/>
            <person name="Vargas R."/>
            <person name="Appel R.D."/>
            <person name="Hughes G.J."/>
        </authorList>
    </citation>
    <scope>PROTEIN SEQUENCE OF 2-11</scope>
    <source>
        <tissue>Liver</tissue>
    </source>
</reference>
<reference key="11">
    <citation type="journal article" date="1993" name="Electrophoresis">
        <title>Plasma and red blood cell protein maps: update 1993.</title>
        <authorList>
            <person name="Golaz O."/>
            <person name="Hughes G.J."/>
            <person name="Frutiger S."/>
            <person name="Paquet N."/>
            <person name="Bairoch A."/>
            <person name="Pasquali C."/>
            <person name="Sanchez J.-C."/>
            <person name="Tissot J.-D."/>
            <person name="Appel R.D."/>
            <person name="Walzer C."/>
            <person name="Balant L."/>
            <person name="Hochstrasser D.F."/>
        </authorList>
    </citation>
    <scope>PROTEIN SEQUENCE OF 2-11</scope>
    <source>
        <tissue>Erythrocyte</tissue>
    </source>
</reference>
<reference key="12">
    <citation type="submission" date="2008-12" db="UniProtKB">
        <authorList>
            <person name="Lubec G."/>
            <person name="Vishwanath V."/>
            <person name="Chen W.-Q."/>
            <person name="Sun Y."/>
        </authorList>
    </citation>
    <scope>PROTEIN SEQUENCE OF 40-92; 64-78; 106-124 AND 146-170</scope>
    <scope>IDENTIFICATION BY MASS SPECTROMETRY</scope>
    <source>
        <tissue>Brain</tissue>
        <tissue>Cajal-Retzius cell</tissue>
        <tissue>Fetal brain cortex</tissue>
    </source>
</reference>
<reference key="13">
    <citation type="journal article" date="1996" name="Biochem. J.">
        <title>Evidence that biliverdin-IX beta reductase and flavin reductase are identical.</title>
        <authorList>
            <person name="Shalloe F."/>
            <person name="Elliott G."/>
            <person name="Ennis O."/>
            <person name="Mantle T.J."/>
        </authorList>
    </citation>
    <scope>IDENTITY OF FR AND BVR-B</scope>
</reference>
<reference key="14">
    <citation type="journal article" date="2000" name="Biochem. J.">
        <title>Initial-rate kinetics of the flavin reductase reaction catalysed by human biliverdin-IXbeta reductase (BVR-B).</title>
        <authorList>
            <person name="Cunningham O."/>
            <person name="Gore M.G."/>
            <person name="Mantle T.J."/>
        </authorList>
    </citation>
    <scope>FUNCTION</scope>
    <scope>ACTIVITY REGULATION</scope>
    <scope>CATALYTIC ACTIVITY</scope>
    <scope>BIOPHYSICOCHEMICAL PROPERTIES</scope>
</reference>
<reference key="15">
    <citation type="journal article" date="2000" name="J. Biol. Chem.">
        <title>Studies on the specificity of the tetrapyrrole substrate for human biliverdin-IXalpha reductase and biliverdin-IXbeta reductase. Structure-activity relationships define models for both active sites.</title>
        <authorList>
            <person name="Cunningham O."/>
            <person name="Dunne A."/>
            <person name="Sabido P."/>
            <person name="Lightner D."/>
            <person name="Mantle T.J."/>
        </authorList>
    </citation>
    <scope>FUNCTION</scope>
    <scope>CATALYTIC ACTIVITY</scope>
</reference>
<reference key="16">
    <citation type="journal article" date="2008" name="Biochem. J.">
        <title>Computational and experimental studies on the catalytic mechanism of biliverdin-IXbeta reductase.</title>
        <authorList>
            <person name="Smith L.J."/>
            <person name="Browne S."/>
            <person name="Mulholland A.J."/>
            <person name="Mantle T.J."/>
        </authorList>
    </citation>
    <scope>FUNCTION</scope>
    <scope>CATALYTIC ACTIVITY</scope>
    <scope>MUTAGENESIS OF HIS-153</scope>
</reference>
<reference key="17">
    <citation type="journal article" date="2011" name="BMC Syst. Biol.">
        <title>Initial characterization of the human central proteome.</title>
        <authorList>
            <person name="Burkard T.R."/>
            <person name="Planyavsky M."/>
            <person name="Kaupe I."/>
            <person name="Breitwieser F.P."/>
            <person name="Buerckstuemmer T."/>
            <person name="Bennett K.L."/>
            <person name="Superti-Furga G."/>
            <person name="Colinge J."/>
        </authorList>
    </citation>
    <scope>IDENTIFICATION BY MASS SPECTROMETRY [LARGE SCALE ANALYSIS]</scope>
</reference>
<reference key="18">
    <citation type="journal article" date="2013" name="J. Proteome Res.">
        <title>Toward a comprehensive characterization of a human cancer cell phosphoproteome.</title>
        <authorList>
            <person name="Zhou H."/>
            <person name="Di Palma S."/>
            <person name="Preisinger C."/>
            <person name="Peng M."/>
            <person name="Polat A.N."/>
            <person name="Heck A.J."/>
            <person name="Mohammed S."/>
        </authorList>
    </citation>
    <scope>PHOSPHORYLATION [LARGE SCALE ANALYSIS] AT SER-82</scope>
    <scope>IDENTIFICATION BY MASS SPECTROMETRY [LARGE SCALE ANALYSIS]</scope>
    <source>
        <tissue>Cervix carcinoma</tissue>
        <tissue>Erythroleukemia</tissue>
    </source>
</reference>
<reference key="19">
    <citation type="journal article" date="2014" name="J. Proteomics">
        <title>An enzyme assisted RP-RPLC approach for in-depth analysis of human liver phosphoproteome.</title>
        <authorList>
            <person name="Bian Y."/>
            <person name="Song C."/>
            <person name="Cheng K."/>
            <person name="Dong M."/>
            <person name="Wang F."/>
            <person name="Huang J."/>
            <person name="Sun D."/>
            <person name="Wang L."/>
            <person name="Ye M."/>
            <person name="Zou H."/>
        </authorList>
    </citation>
    <scope>PHOSPHORYLATION [LARGE SCALE ANALYSIS] AT SER-42</scope>
    <scope>IDENTIFICATION BY MASS SPECTROMETRY [LARGE SCALE ANALYSIS]</scope>
    <source>
        <tissue>Liver</tissue>
    </source>
</reference>
<reference key="20">
    <citation type="journal article" date="2015" name="Proteomics">
        <title>N-terminome analysis of the human mitochondrial proteome.</title>
        <authorList>
            <person name="Vaca Jacome A.S."/>
            <person name="Rabilloud T."/>
            <person name="Schaeffer-Reiss C."/>
            <person name="Rompais M."/>
            <person name="Ayoub D."/>
            <person name="Lane L."/>
            <person name="Bairoch A."/>
            <person name="Van Dorsselaer A."/>
            <person name="Carapito C."/>
        </authorList>
    </citation>
    <scope>IDENTIFICATION BY MASS SPECTROMETRY [LARGE SCALE ANALYSIS]</scope>
</reference>
<reference key="21">
    <citation type="journal article" date="2016" name="Blood">
        <title>BLVRB redox mutation defines heme degradation in a metabolic pathway of enhanced thrombopoiesis in humans.</title>
        <authorList>
            <person name="Wu S."/>
            <person name="Li Z."/>
            <person name="Gnatenko D.V."/>
            <person name="Zhang B."/>
            <person name="Zhao L."/>
            <person name="Malone L.E."/>
            <person name="Markova N."/>
            <person name="Mantle T.J."/>
            <person name="Nesbitt N.M."/>
            <person name="Bahou W.F."/>
        </authorList>
    </citation>
    <scope>FUNCTION</scope>
    <scope>VARIANT LEU-111</scope>
    <scope>CHARACTERIZATION OF VARIANT LEU-111</scope>
</reference>
<reference key="22">
    <citation type="journal article" date="2017" name="Chemistry">
        <title>Enzymatic Activity and Thermodynamic Stability of Biliverdin IXbeta Reductase Are Maintained by an Active Site Serine.</title>
        <authorList>
            <person name="Chu W.T."/>
            <person name="Nesbitt N.M."/>
            <person name="Gnatenko D.V."/>
            <person name="Li Z."/>
            <person name="Zhang B."/>
            <person name="Seeliger M.A."/>
            <person name="Browne S."/>
            <person name="Mantle T.J."/>
            <person name="Bahou W.F."/>
            <person name="Wang J."/>
        </authorList>
    </citation>
    <scope>CHARACTERIZATION OF VARIANT LEU-111</scope>
    <scope>MUTAGENESIS OF SER-111</scope>
</reference>
<reference key="23">
    <citation type="journal article" date="2018" name="Biochem. J.">
        <title>Heme degradation enzyme biliverdin IXbeta reductase is required for stem cell glutamine metabolism.</title>
        <authorList>
            <person name="Li Z."/>
            <person name="Nesbitt N.M."/>
            <person name="Malone L.E."/>
            <person name="Gnatenko D.V."/>
            <person name="Wu S."/>
            <person name="Wang D."/>
            <person name="Zhu W."/>
            <person name="Girnun G.D."/>
            <person name="Bahou W.F."/>
        </authorList>
    </citation>
    <scope>FUNCTION</scope>
</reference>
<reference key="24">
    <citation type="journal article" date="2018" name="J. Mol. Biol.">
        <title>BiliveRDIN REDUCTAse B dynamics are coupled to coenzyme binding.</title>
        <authorList>
            <person name="Paukovich N."/>
            <person name="Xue M."/>
            <person name="Elder J.R."/>
            <person name="Redzic J.S."/>
            <person name="Blue A."/>
            <person name="Pike H."/>
            <person name="Miller B.G."/>
            <person name="Pitts T.M."/>
            <person name="Pollock D.D."/>
            <person name="Hansen K."/>
            <person name="D'Alessandro A."/>
            <person name="Eisenmesser E.Z."/>
        </authorList>
    </citation>
    <scope>TISSUE SPECIFICITY</scope>
    <scope>MUTAGENESIS OF ARG-78</scope>
</reference>
<reference key="25">
    <citation type="journal article" date="2023" name="Cell">
        <title>An enzyme that selectively S-nitrosylates proteins to regulate insulin signaling.</title>
        <authorList>
            <person name="Zhou H.L."/>
            <person name="Grimmett Z.W."/>
            <person name="Venetos N.M."/>
            <person name="Stomberski C.T."/>
            <person name="Qian Z."/>
            <person name="McLaughlin P.J."/>
            <person name="Bansal P.K."/>
            <person name="Zhang R."/>
            <person name="Reynolds J.D."/>
            <person name="Premont R.T."/>
            <person name="Stamler J.S."/>
        </authorList>
    </citation>
    <scope>FUNCTION</scope>
    <scope>CATALYTIC ACTIVITY</scope>
    <scope>BIOPHYSICOCHEMICAL PROPERTIES</scope>
    <scope>ACTIVE SITE</scope>
    <scope>SUBCELLULAR LOCATION</scope>
    <scope>MUTAGENESIS OF 14-GLN--GLY-16; CYS-109 AND CYS-188</scope>
</reference>
<reference evidence="25 26 27 28 29" key="26">
    <citation type="journal article" date="2001" name="Nat. Struct. Biol.">
        <title>Structure of human biliverdin IXbeta reductase, an early fetal bilirubin IXbeta producing enzyme.</title>
        <authorList>
            <person name="Pereira P.J."/>
            <person name="Macedo-Ribeiro S."/>
            <person name="Parraga A."/>
            <person name="Perez-Luque R."/>
            <person name="Cunningham O."/>
            <person name="Darcy K."/>
            <person name="Mantle T.J."/>
            <person name="Coll M."/>
        </authorList>
    </citation>
    <scope>X-RAY CRYSTALLOGRAPHY (1.15 ANGSTROMS) IN COMPLEXES WITH MESOBILIVERDIN; BILIVERDIN; FLAVIN MONONUCLEOTIDE; LUMICHROME AND NADP</scope>
    <scope>SUBUNIT</scope>
</reference>
<reference evidence="30 31" key="27">
    <citation type="journal article" date="2018" name="J. Biol. Chem.">
        <title>In silico and crystallographic studies identify key structural features of biliverdin IXbeta reductase inhibitors having nanomolar potency.</title>
        <authorList>
            <person name="Nesbitt N.M."/>
            <person name="Zheng X."/>
            <person name="Li Z."/>
            <person name="Manso J.A."/>
            <person name="Yen W.Y."/>
            <person name="Malone L.E."/>
            <person name="Ripoll-Rozada J."/>
            <person name="Pereira P.J.B."/>
            <person name="Mantle T.J."/>
            <person name="Wang J."/>
            <person name="Bahou W.F."/>
        </authorList>
    </citation>
    <scope>X-RAY CRYSTALLOGRAPHY (1.20 ANGSTROMS) IN COMPLEX WITH NADP(+)</scope>
    <scope>ACTIVITY REGULATION</scope>
</reference>
<reference evidence="32" key="28">
    <citation type="journal article" date="2020" name="J. Biochem.">
        <title>Structure, dynamics and function of the evolutionarily changing biliverdin reductase B family.</title>
        <authorList>
            <person name="Duff M.R."/>
            <person name="Redzic J.S."/>
            <person name="Ryan L.P."/>
            <person name="Paukovich N."/>
            <person name="Zhao R."/>
            <person name="Nix J.C."/>
            <person name="Pitts T.M."/>
            <person name="Agarwal P."/>
            <person name="Eisenmesser E.Z."/>
        </authorList>
    </citation>
    <scope>X-RAY CRYSTALLOGRAPHY (1.37 ANGSTROMS) OF 1-205 IN COMPLEX WITH NADP(+)</scope>
    <scope>MUTAGENESIS OF GLN-14 AND ARG-78</scope>
</reference>
<reference evidence="33 34 35 36 37 38 39 40 41" key="29">
    <citation type="journal article" date="2022" name="J. Med. Chem.">
        <title>Repositioning food and drug administration-approved drugs for inhibiting biliverdin IXbeta reductase B as a novel thrombocytopenia therapeutic target.</title>
        <authorList>
            <person name="Kim M."/>
            <person name="Ha J.H."/>
            <person name="Choi J."/>
            <person name="Kim B.R."/>
            <person name="Gapsys V."/>
            <person name="Lee K.O."/>
            <person name="Jee J.G."/>
            <person name="Chakrabarti K.S."/>
            <person name="de Groot B.L."/>
            <person name="Griesinger C."/>
            <person name="Ryu K.S."/>
            <person name="Lee D."/>
        </authorList>
    </citation>
    <scope>X-RAY CRYSTALLOGRAPHY (1.35 ANGSTROMS) IN COMPLEX WITH NADP(+)</scope>
    <scope>ACTIVITY REGULATION</scope>
</reference>
<reference evidence="42 43" key="30">
    <citation type="journal article" date="2023" name="Front. Mol. Biosci.">
        <title>Identifying structural and dynamic changes during the Biliverdin Reductase B catalytic cycle.</title>
        <authorList>
            <person name="Lee E."/>
            <person name="McLeod M.J."/>
            <person name="Redzic J.S."/>
            <person name="Marcolin B."/>
            <person name="Thorne R.E."/>
            <person name="Agarwal P."/>
            <person name="Eisenmesser E.Z."/>
        </authorList>
    </citation>
    <scope>X-RAY CRYSTALLOGRAPHY (1.52 ANGSTROMS)</scope>
</reference>
<evidence type="ECO:0000269" key="1">
    <source>
    </source>
</evidence>
<evidence type="ECO:0000269" key="2">
    <source>
    </source>
</evidence>
<evidence type="ECO:0000269" key="3">
    <source>
    </source>
</evidence>
<evidence type="ECO:0000269" key="4">
    <source>
    </source>
</evidence>
<evidence type="ECO:0000269" key="5">
    <source>
    </source>
</evidence>
<evidence type="ECO:0000269" key="6">
    <source>
    </source>
</evidence>
<evidence type="ECO:0000269" key="7">
    <source>
    </source>
</evidence>
<evidence type="ECO:0000269" key="8">
    <source>
    </source>
</evidence>
<evidence type="ECO:0000269" key="9">
    <source>
    </source>
</evidence>
<evidence type="ECO:0000269" key="10">
    <source>
    </source>
</evidence>
<evidence type="ECO:0000269" key="11">
    <source>
    </source>
</evidence>
<evidence type="ECO:0000269" key="12">
    <source>
    </source>
</evidence>
<evidence type="ECO:0000269" key="13">
    <source>
    </source>
</evidence>
<evidence type="ECO:0000269" key="14">
    <source>
    </source>
</evidence>
<evidence type="ECO:0000269" key="15">
    <source>
    </source>
</evidence>
<evidence type="ECO:0000269" key="16">
    <source>
    </source>
</evidence>
<evidence type="ECO:0000269" key="17">
    <source>
    </source>
</evidence>
<evidence type="ECO:0000269" key="18">
    <source ref="4"/>
</evidence>
<evidence type="ECO:0000303" key="19">
    <source>
    </source>
</evidence>
<evidence type="ECO:0000303" key="20">
    <source>
    </source>
</evidence>
<evidence type="ECO:0000303" key="21">
    <source>
    </source>
</evidence>
<evidence type="ECO:0000303" key="22">
    <source>
    </source>
</evidence>
<evidence type="ECO:0000305" key="23"/>
<evidence type="ECO:0000312" key="24">
    <source>
        <dbReference type="HGNC" id="HGNC:1063"/>
    </source>
</evidence>
<evidence type="ECO:0007744" key="25">
    <source>
        <dbReference type="PDB" id="1HDO"/>
    </source>
</evidence>
<evidence type="ECO:0007744" key="26">
    <source>
        <dbReference type="PDB" id="1HE2"/>
    </source>
</evidence>
<evidence type="ECO:0007744" key="27">
    <source>
        <dbReference type="PDB" id="1HE3"/>
    </source>
</evidence>
<evidence type="ECO:0007744" key="28">
    <source>
        <dbReference type="PDB" id="1HE4"/>
    </source>
</evidence>
<evidence type="ECO:0007744" key="29">
    <source>
        <dbReference type="PDB" id="1HE5"/>
    </source>
</evidence>
<evidence type="ECO:0007744" key="30">
    <source>
        <dbReference type="PDB" id="5OOG"/>
    </source>
</evidence>
<evidence type="ECO:0007744" key="31">
    <source>
        <dbReference type="PDB" id="5OOH"/>
    </source>
</evidence>
<evidence type="ECO:0007744" key="32">
    <source>
        <dbReference type="PDB" id="6OPL"/>
    </source>
</evidence>
<evidence type="ECO:0007744" key="33">
    <source>
        <dbReference type="PDB" id="7ER6"/>
    </source>
</evidence>
<evidence type="ECO:0007744" key="34">
    <source>
        <dbReference type="PDB" id="7ER7"/>
    </source>
</evidence>
<evidence type="ECO:0007744" key="35">
    <source>
        <dbReference type="PDB" id="7ER8"/>
    </source>
</evidence>
<evidence type="ECO:0007744" key="36">
    <source>
        <dbReference type="PDB" id="7ER9"/>
    </source>
</evidence>
<evidence type="ECO:0007744" key="37">
    <source>
        <dbReference type="PDB" id="7ERA"/>
    </source>
</evidence>
<evidence type="ECO:0007744" key="38">
    <source>
        <dbReference type="PDB" id="7ERB"/>
    </source>
</evidence>
<evidence type="ECO:0007744" key="39">
    <source>
        <dbReference type="PDB" id="7ERC"/>
    </source>
</evidence>
<evidence type="ECO:0007744" key="40">
    <source>
        <dbReference type="PDB" id="7ERD"/>
    </source>
</evidence>
<evidence type="ECO:0007744" key="41">
    <source>
        <dbReference type="PDB" id="7ERE"/>
    </source>
</evidence>
<evidence type="ECO:0007744" key="42">
    <source>
        <dbReference type="PDB" id="8ELL"/>
    </source>
</evidence>
<evidence type="ECO:0007744" key="43">
    <source>
        <dbReference type="PDB" id="8ELM"/>
    </source>
</evidence>
<evidence type="ECO:0007744" key="44">
    <source>
    </source>
</evidence>
<evidence type="ECO:0007744" key="45">
    <source>
    </source>
</evidence>
<evidence type="ECO:0007829" key="46">
    <source>
        <dbReference type="PDB" id="1HDO"/>
    </source>
</evidence>
<evidence type="ECO:0007829" key="47">
    <source>
        <dbReference type="PDB" id="1HE2"/>
    </source>
</evidence>
<gene>
    <name evidence="24" type="primary">BLVRB</name>
    <name type="synonym">FLR</name>
    <name evidence="20" type="synonym">SCAN</name>
</gene>